<protein>
    <recommendedName>
        <fullName evidence="1">Homoserine O-succinyltransferase</fullName>
        <shortName evidence="1">HST</shortName>
        <ecNumber evidence="1">2.3.1.46</ecNumber>
    </recommendedName>
    <alternativeName>
        <fullName evidence="1">Homoserine transsuccinylase</fullName>
        <shortName evidence="1">HTS</shortName>
    </alternativeName>
</protein>
<comment type="function">
    <text evidence="1">Transfers a succinyl group from succinyl-CoA to L-homoserine, forming succinyl-L-homoserine.</text>
</comment>
<comment type="catalytic activity">
    <reaction evidence="1">
        <text>L-homoserine + succinyl-CoA = O-succinyl-L-homoserine + CoA</text>
        <dbReference type="Rhea" id="RHEA:22008"/>
        <dbReference type="ChEBI" id="CHEBI:57287"/>
        <dbReference type="ChEBI" id="CHEBI:57292"/>
        <dbReference type="ChEBI" id="CHEBI:57476"/>
        <dbReference type="ChEBI" id="CHEBI:57661"/>
        <dbReference type="EC" id="2.3.1.46"/>
    </reaction>
</comment>
<comment type="pathway">
    <text evidence="1">Amino-acid biosynthesis; L-methionine biosynthesis via de novo pathway; O-succinyl-L-homoserine from L-homoserine: step 1/1.</text>
</comment>
<comment type="subcellular location">
    <subcellularLocation>
        <location evidence="1">Cytoplasm</location>
    </subcellularLocation>
</comment>
<comment type="similarity">
    <text evidence="1">Belongs to the MetA family.</text>
</comment>
<keyword id="KW-0012">Acyltransferase</keyword>
<keyword id="KW-0028">Amino-acid biosynthesis</keyword>
<keyword id="KW-0963">Cytoplasm</keyword>
<keyword id="KW-0486">Methionine biosynthesis</keyword>
<keyword id="KW-1185">Reference proteome</keyword>
<keyword id="KW-0808">Transferase</keyword>
<name>METAS_AERHH</name>
<organism>
    <name type="scientific">Aeromonas hydrophila subsp. hydrophila (strain ATCC 7966 / DSM 30187 / BCRC 13018 / CCUG 14551 / JCM 1027 / KCTC 2358 / NCIMB 9240 / NCTC 8049)</name>
    <dbReference type="NCBI Taxonomy" id="380703"/>
    <lineage>
        <taxon>Bacteria</taxon>
        <taxon>Pseudomonadati</taxon>
        <taxon>Pseudomonadota</taxon>
        <taxon>Gammaproteobacteria</taxon>
        <taxon>Aeromonadales</taxon>
        <taxon>Aeromonadaceae</taxon>
        <taxon>Aeromonas</taxon>
    </lineage>
</organism>
<feature type="chain" id="PRO_1000021794" description="Homoserine O-succinyltransferase">
    <location>
        <begin position="1"/>
        <end position="317"/>
    </location>
</feature>
<feature type="active site" description="Acyl-thioester intermediate" evidence="1">
    <location>
        <position position="142"/>
    </location>
</feature>
<feature type="active site" description="Proton acceptor" evidence="1">
    <location>
        <position position="235"/>
    </location>
</feature>
<feature type="active site" evidence="1">
    <location>
        <position position="237"/>
    </location>
</feature>
<feature type="binding site" evidence="1">
    <location>
        <position position="163"/>
    </location>
    <ligand>
        <name>substrate</name>
    </ligand>
</feature>
<feature type="binding site" evidence="1">
    <location>
        <position position="192"/>
    </location>
    <ligand>
        <name>substrate</name>
    </ligand>
</feature>
<feature type="binding site" evidence="1">
    <location>
        <position position="249"/>
    </location>
    <ligand>
        <name>substrate</name>
    </ligand>
</feature>
<feature type="site" description="Important for acyl-CoA specificity" evidence="1">
    <location>
        <position position="111"/>
    </location>
</feature>
<feature type="site" description="Important for substrate specificity" evidence="1">
    <location>
        <position position="192"/>
    </location>
</feature>
<dbReference type="EC" id="2.3.1.46" evidence="1"/>
<dbReference type="EMBL" id="CP000462">
    <property type="protein sequence ID" value="ABK39388.1"/>
    <property type="molecule type" value="Genomic_DNA"/>
</dbReference>
<dbReference type="RefSeq" id="YP_855022.1">
    <property type="nucleotide sequence ID" value="NC_008570.1"/>
</dbReference>
<dbReference type="SMR" id="A0KFJ6"/>
<dbReference type="STRING" id="380703.AHA_0489"/>
<dbReference type="EnsemblBacteria" id="ABK39388">
    <property type="protein sequence ID" value="ABK39388"/>
    <property type="gene ID" value="AHA_0489"/>
</dbReference>
<dbReference type="GeneID" id="4490071"/>
<dbReference type="KEGG" id="aha:AHA_0489"/>
<dbReference type="PATRIC" id="fig|380703.7.peg.482"/>
<dbReference type="eggNOG" id="COG1897">
    <property type="taxonomic scope" value="Bacteria"/>
</dbReference>
<dbReference type="HOGENOM" id="CLU_057851_0_1_6"/>
<dbReference type="OrthoDB" id="9772423at2"/>
<dbReference type="UniPathway" id="UPA00051">
    <property type="reaction ID" value="UER00075"/>
</dbReference>
<dbReference type="Proteomes" id="UP000000756">
    <property type="component" value="Chromosome"/>
</dbReference>
<dbReference type="GO" id="GO:0005737">
    <property type="term" value="C:cytoplasm"/>
    <property type="evidence" value="ECO:0007669"/>
    <property type="project" value="UniProtKB-SubCell"/>
</dbReference>
<dbReference type="GO" id="GO:0004414">
    <property type="term" value="F:homoserine O-acetyltransferase activity"/>
    <property type="evidence" value="ECO:0007669"/>
    <property type="project" value="UniProtKB-UniRule"/>
</dbReference>
<dbReference type="GO" id="GO:0008899">
    <property type="term" value="F:homoserine O-succinyltransferase activity"/>
    <property type="evidence" value="ECO:0007669"/>
    <property type="project" value="UniProtKB-EC"/>
</dbReference>
<dbReference type="GO" id="GO:0019281">
    <property type="term" value="P:L-methionine biosynthetic process from homoserine via O-succinyl-L-homoserine and cystathionine"/>
    <property type="evidence" value="ECO:0007669"/>
    <property type="project" value="InterPro"/>
</dbReference>
<dbReference type="CDD" id="cd03131">
    <property type="entry name" value="GATase1_HTS"/>
    <property type="match status" value="1"/>
</dbReference>
<dbReference type="FunFam" id="3.40.50.880:FF:000004">
    <property type="entry name" value="Homoserine O-succinyltransferase"/>
    <property type="match status" value="1"/>
</dbReference>
<dbReference type="Gene3D" id="3.40.50.880">
    <property type="match status" value="1"/>
</dbReference>
<dbReference type="HAMAP" id="MF_00295">
    <property type="entry name" value="MetA_acyltransf"/>
    <property type="match status" value="1"/>
</dbReference>
<dbReference type="InterPro" id="IPR029062">
    <property type="entry name" value="Class_I_gatase-like"/>
</dbReference>
<dbReference type="InterPro" id="IPR005697">
    <property type="entry name" value="HST_MetA"/>
</dbReference>
<dbReference type="InterPro" id="IPR033752">
    <property type="entry name" value="MetA_family"/>
</dbReference>
<dbReference type="NCBIfam" id="TIGR01001">
    <property type="entry name" value="metA"/>
    <property type="match status" value="1"/>
</dbReference>
<dbReference type="PANTHER" id="PTHR20919">
    <property type="entry name" value="HOMOSERINE O-SUCCINYLTRANSFERASE"/>
    <property type="match status" value="1"/>
</dbReference>
<dbReference type="PANTHER" id="PTHR20919:SF0">
    <property type="entry name" value="HOMOSERINE O-SUCCINYLTRANSFERASE"/>
    <property type="match status" value="1"/>
</dbReference>
<dbReference type="Pfam" id="PF04204">
    <property type="entry name" value="HTS"/>
    <property type="match status" value="1"/>
</dbReference>
<dbReference type="PIRSF" id="PIRSF000450">
    <property type="entry name" value="H_ser_succinyltr"/>
    <property type="match status" value="1"/>
</dbReference>
<dbReference type="SUPFAM" id="SSF52317">
    <property type="entry name" value="Class I glutamine amidotransferase-like"/>
    <property type="match status" value="1"/>
</dbReference>
<evidence type="ECO:0000255" key="1">
    <source>
        <dbReference type="HAMAP-Rule" id="MF_00295"/>
    </source>
</evidence>
<reference key="1">
    <citation type="journal article" date="2006" name="J. Bacteriol.">
        <title>Genome sequence of Aeromonas hydrophila ATCC 7966T: jack of all trades.</title>
        <authorList>
            <person name="Seshadri R."/>
            <person name="Joseph S.W."/>
            <person name="Chopra A.K."/>
            <person name="Sha J."/>
            <person name="Shaw J."/>
            <person name="Graf J."/>
            <person name="Haft D.H."/>
            <person name="Wu M."/>
            <person name="Ren Q."/>
            <person name="Rosovitz M.J."/>
            <person name="Madupu R."/>
            <person name="Tallon L."/>
            <person name="Kim M."/>
            <person name="Jin S."/>
            <person name="Vuong H."/>
            <person name="Stine O.C."/>
            <person name="Ali A."/>
            <person name="Horneman A.J."/>
            <person name="Heidelberg J.F."/>
        </authorList>
    </citation>
    <scope>NUCLEOTIDE SEQUENCE [LARGE SCALE GENOMIC DNA]</scope>
    <source>
        <strain>ATCC 7966 / DSM 30187 / BCRC 13018 / CCUG 14551 / JCM 1027 / KCTC 2358 / NCIMB 9240 / NCTC 8049</strain>
    </source>
</reference>
<sequence>MPIKIPDQLPAAEVLGQENIFVMTESRAVTQNIRPLRVLILNLMPKKIETEIQLMRMLSNSPLQVDVDLLRIDDRESKNTPQAHLENFYHDFEQVRGNNYDGMIITGAPLGLVEFEEVVYWPRIVEIIEWSHQHVTSTLFLCWAVQAALKALYGMEKQTHGEKLSGVYRHHRLDEHEPLLRGFDDEFVAPHSRYAAFDGDLIRAHTDLQIFAESAEAGVYLAATKDCRQVFVTGHPEYDALTLDGEYQRDLAAGLEPVIPVNYYPDNDPTRTPRASWRSHGHLLFSNWLNYYVYQLTSYRVEDIGKVFTYQQNSPSR</sequence>
<proteinExistence type="inferred from homology"/>
<accession>A0KFJ6</accession>
<gene>
    <name evidence="1" type="primary">metAS</name>
    <name type="ordered locus">AHA_0489</name>
</gene>